<sequence length="165" mass="13536">MARKVIALAFLLLLTISLSKSNAARVIKYNGGGSGGGGGGGGGGGGGGNGSGSGSGYGYGYGKAGGQSGGGQGSGGGGGGGGGGGNGSGSGSGYGYGYGQGNGGAQGQGSGGGGGGGGGGGGGGSGQGSGSGYGYGYGKGGGGGGGGGGGGGGGGGGSGYVGKHE</sequence>
<organism>
    <name type="scientific">Oryza sativa subsp. indica</name>
    <name type="common">Rice</name>
    <dbReference type="NCBI Taxonomy" id="39946"/>
    <lineage>
        <taxon>Eukaryota</taxon>
        <taxon>Viridiplantae</taxon>
        <taxon>Streptophyta</taxon>
        <taxon>Embryophyta</taxon>
        <taxon>Tracheophyta</taxon>
        <taxon>Spermatophyta</taxon>
        <taxon>Magnoliopsida</taxon>
        <taxon>Liliopsida</taxon>
        <taxon>Poales</taxon>
        <taxon>Poaceae</taxon>
        <taxon>BOP clade</taxon>
        <taxon>Oryzoideae</taxon>
        <taxon>Oryzeae</taxon>
        <taxon>Oryzinae</taxon>
        <taxon>Oryza</taxon>
        <taxon>Oryza sativa</taxon>
    </lineage>
</organism>
<name>GRP1_ORYSI</name>
<comment type="function">
    <text evidence="3">Responsible for plasticity of the cell wall.</text>
</comment>
<comment type="subcellular location">
    <subcellularLocation>
        <location evidence="3">Secreted</location>
        <location evidence="3">Cell wall</location>
    </subcellularLocation>
</comment>
<proteinExistence type="inferred from homology"/>
<protein>
    <recommendedName>
        <fullName>Putative glycine-rich cell wall structural protein 1</fullName>
    </recommendedName>
</protein>
<feature type="signal peptide" evidence="1">
    <location>
        <begin position="1"/>
        <end position="23"/>
    </location>
</feature>
<feature type="chain" id="PRO_0000295658" description="Putative glycine-rich cell wall structural protein 1">
    <location>
        <begin position="24"/>
        <end position="165"/>
    </location>
</feature>
<feature type="repeat" description="R2; Tyr-rich">
    <location>
        <begin position="56"/>
        <end position="62"/>
    </location>
</feature>
<feature type="repeat" description="R2; Tyr-rich">
    <location>
        <begin position="93"/>
        <end position="99"/>
    </location>
</feature>
<feature type="repeat" description="R2; Tyr-rich">
    <location>
        <begin position="132"/>
        <end position="138"/>
    </location>
</feature>
<feature type="region of interest" description="Disordered" evidence="2">
    <location>
        <begin position="105"/>
        <end position="125"/>
    </location>
</feature>
<feature type="region of interest" description="Disordered" evidence="2">
    <location>
        <begin position="146"/>
        <end position="165"/>
    </location>
</feature>
<keyword id="KW-0134">Cell wall</keyword>
<keyword id="KW-0961">Cell wall biogenesis/degradation</keyword>
<keyword id="KW-1185">Reference proteome</keyword>
<keyword id="KW-0677">Repeat</keyword>
<keyword id="KW-0964">Secreted</keyword>
<keyword id="KW-0732">Signal</keyword>
<accession>A2ZJC9</accession>
<accession>P25074</accession>
<accession>Q2QV69</accession>
<evidence type="ECO:0000255" key="1"/>
<evidence type="ECO:0000256" key="2">
    <source>
        <dbReference type="SAM" id="MobiDB-lite"/>
    </source>
</evidence>
<evidence type="ECO:0000305" key="3"/>
<reference key="1">
    <citation type="journal article" date="1991" name="Plant Mol. Biol.">
        <title>A novel glycine-rich cell wall protein gene in rice.</title>
        <authorList>
            <person name="Lei M."/>
            <person name="Wu R."/>
        </authorList>
    </citation>
    <scope>NUCLEOTIDE SEQUENCE [GENOMIC DNA]</scope>
    <source>
        <strain>cv. IR36</strain>
    </source>
</reference>
<reference key="2">
    <citation type="journal article" date="2005" name="PLoS Biol.">
        <title>The genomes of Oryza sativa: a history of duplications.</title>
        <authorList>
            <person name="Yu J."/>
            <person name="Wang J."/>
            <person name="Lin W."/>
            <person name="Li S."/>
            <person name="Li H."/>
            <person name="Zhou J."/>
            <person name="Ni P."/>
            <person name="Dong W."/>
            <person name="Hu S."/>
            <person name="Zeng C."/>
            <person name="Zhang J."/>
            <person name="Zhang Y."/>
            <person name="Li R."/>
            <person name="Xu Z."/>
            <person name="Li S."/>
            <person name="Li X."/>
            <person name="Zheng H."/>
            <person name="Cong L."/>
            <person name="Lin L."/>
            <person name="Yin J."/>
            <person name="Geng J."/>
            <person name="Li G."/>
            <person name="Shi J."/>
            <person name="Liu J."/>
            <person name="Lv H."/>
            <person name="Li J."/>
            <person name="Wang J."/>
            <person name="Deng Y."/>
            <person name="Ran L."/>
            <person name="Shi X."/>
            <person name="Wang X."/>
            <person name="Wu Q."/>
            <person name="Li C."/>
            <person name="Ren X."/>
            <person name="Wang J."/>
            <person name="Wang X."/>
            <person name="Li D."/>
            <person name="Liu D."/>
            <person name="Zhang X."/>
            <person name="Ji Z."/>
            <person name="Zhao W."/>
            <person name="Sun Y."/>
            <person name="Zhang Z."/>
            <person name="Bao J."/>
            <person name="Han Y."/>
            <person name="Dong L."/>
            <person name="Ji J."/>
            <person name="Chen P."/>
            <person name="Wu S."/>
            <person name="Liu J."/>
            <person name="Xiao Y."/>
            <person name="Bu D."/>
            <person name="Tan J."/>
            <person name="Yang L."/>
            <person name="Ye C."/>
            <person name="Zhang J."/>
            <person name="Xu J."/>
            <person name="Zhou Y."/>
            <person name="Yu Y."/>
            <person name="Zhang B."/>
            <person name="Zhuang S."/>
            <person name="Wei H."/>
            <person name="Liu B."/>
            <person name="Lei M."/>
            <person name="Yu H."/>
            <person name="Li Y."/>
            <person name="Xu H."/>
            <person name="Wei S."/>
            <person name="He X."/>
            <person name="Fang L."/>
            <person name="Zhang Z."/>
            <person name="Zhang Y."/>
            <person name="Huang X."/>
            <person name="Su Z."/>
            <person name="Tong W."/>
            <person name="Li J."/>
            <person name="Tong Z."/>
            <person name="Li S."/>
            <person name="Ye J."/>
            <person name="Wang L."/>
            <person name="Fang L."/>
            <person name="Lei T."/>
            <person name="Chen C.-S."/>
            <person name="Chen H.-C."/>
            <person name="Xu Z."/>
            <person name="Li H."/>
            <person name="Huang H."/>
            <person name="Zhang F."/>
            <person name="Xu H."/>
            <person name="Li N."/>
            <person name="Zhao C."/>
            <person name="Li S."/>
            <person name="Dong L."/>
            <person name="Huang Y."/>
            <person name="Li L."/>
            <person name="Xi Y."/>
            <person name="Qi Q."/>
            <person name="Li W."/>
            <person name="Zhang B."/>
            <person name="Hu W."/>
            <person name="Zhang Y."/>
            <person name="Tian X."/>
            <person name="Jiao Y."/>
            <person name="Liang X."/>
            <person name="Jin J."/>
            <person name="Gao L."/>
            <person name="Zheng W."/>
            <person name="Hao B."/>
            <person name="Liu S.-M."/>
            <person name="Wang W."/>
            <person name="Yuan L."/>
            <person name="Cao M."/>
            <person name="McDermott J."/>
            <person name="Samudrala R."/>
            <person name="Wang J."/>
            <person name="Wong G.K.-S."/>
            <person name="Yang H."/>
        </authorList>
    </citation>
    <scope>NUCLEOTIDE SEQUENCE [LARGE SCALE GENOMIC DNA]</scope>
    <source>
        <strain>cv. 93-11</strain>
    </source>
</reference>
<gene>
    <name type="primary">GRP-1</name>
    <name type="ORF">OsI_036672</name>
</gene>
<dbReference type="EMBL" id="X53596">
    <property type="protein sequence ID" value="CAA37665.1"/>
    <property type="molecule type" value="Genomic_DNA"/>
</dbReference>
<dbReference type="EMBL" id="CM000137">
    <property type="status" value="NOT_ANNOTATED_CDS"/>
    <property type="molecule type" value="Genomic_DNA"/>
</dbReference>
<dbReference type="PIR" id="S13385">
    <property type="entry name" value="KNRZG1"/>
</dbReference>
<dbReference type="STRING" id="39946.A2ZJC9"/>
<dbReference type="Proteomes" id="UP000007015">
    <property type="component" value="Chromosome 12"/>
</dbReference>
<dbReference type="GO" id="GO:0005576">
    <property type="term" value="C:extracellular region"/>
    <property type="evidence" value="ECO:0007669"/>
    <property type="project" value="UniProtKB-KW"/>
</dbReference>
<dbReference type="GO" id="GO:0071555">
    <property type="term" value="P:cell wall organization"/>
    <property type="evidence" value="ECO:0007669"/>
    <property type="project" value="UniProtKB-KW"/>
</dbReference>
<dbReference type="InterPro" id="IPR040417">
    <property type="entry name" value="GRP1/2"/>
</dbReference>
<dbReference type="PANTHER" id="PTHR33548">
    <property type="entry name" value="GLYCINE-RICH CELL WALL STRUCTURAL PROTEIN 2"/>
    <property type="match status" value="1"/>
</dbReference>
<dbReference type="PRINTS" id="PR01228">
    <property type="entry name" value="EGGSHELL"/>
</dbReference>